<protein>
    <recommendedName>
        <fullName>Cryptochrome-1</fullName>
    </recommendedName>
</protein>
<name>CRY1_RAT</name>
<accession>Q32Q86</accession>
<accession>Q717B5</accession>
<dbReference type="EMBL" id="AF545855">
    <property type="protein sequence ID" value="AAQ11980.1"/>
    <property type="molecule type" value="mRNA"/>
</dbReference>
<dbReference type="EMBL" id="BC107677">
    <property type="protein sequence ID" value="AAI07678.1"/>
    <property type="molecule type" value="mRNA"/>
</dbReference>
<dbReference type="RefSeq" id="NP_942045.2">
    <property type="nucleotide sequence ID" value="NM_198750.2"/>
</dbReference>
<dbReference type="RefSeq" id="XP_008763447.1">
    <property type="nucleotide sequence ID" value="XM_008765225.4"/>
</dbReference>
<dbReference type="RefSeq" id="XP_063119263.1">
    <property type="nucleotide sequence ID" value="XM_063263193.1"/>
</dbReference>
<dbReference type="SMR" id="Q32Q86"/>
<dbReference type="CORUM" id="Q32Q86"/>
<dbReference type="DIP" id="DIP-61213N"/>
<dbReference type="FunCoup" id="Q32Q86">
    <property type="interactions" value="1344"/>
</dbReference>
<dbReference type="IntAct" id="Q32Q86">
    <property type="interactions" value="1"/>
</dbReference>
<dbReference type="STRING" id="10116.ENSRNOP00000009124"/>
<dbReference type="iPTMnet" id="Q32Q86"/>
<dbReference type="PhosphoSitePlus" id="Q32Q86"/>
<dbReference type="PaxDb" id="10116-ENSRNOP00000009124"/>
<dbReference type="Ensembl" id="ENSRNOT00000009124.6">
    <property type="protein sequence ID" value="ENSRNOP00000009124.4"/>
    <property type="gene ID" value="ENSRNOG00000006622.7"/>
</dbReference>
<dbReference type="GeneID" id="299691"/>
<dbReference type="KEGG" id="rno:299691"/>
<dbReference type="UCSC" id="RGD:735083">
    <property type="organism name" value="rat"/>
</dbReference>
<dbReference type="AGR" id="RGD:735083"/>
<dbReference type="CTD" id="1407"/>
<dbReference type="RGD" id="735083">
    <property type="gene designation" value="Cry1"/>
</dbReference>
<dbReference type="eggNOG" id="KOG0133">
    <property type="taxonomic scope" value="Eukaryota"/>
</dbReference>
<dbReference type="GeneTree" id="ENSGT00940000155455"/>
<dbReference type="HOGENOM" id="CLU_010348_3_4_1"/>
<dbReference type="InParanoid" id="Q32Q86"/>
<dbReference type="OMA" id="YTVFTPY"/>
<dbReference type="OrthoDB" id="435881at2759"/>
<dbReference type="PRO" id="PR:Q32Q86"/>
<dbReference type="Proteomes" id="UP000002494">
    <property type="component" value="Chromosome 7"/>
</dbReference>
<dbReference type="Bgee" id="ENSRNOG00000006622">
    <property type="expression patterns" value="Expressed in pancreas and 18 other cell types or tissues"/>
</dbReference>
<dbReference type="GO" id="GO:0005737">
    <property type="term" value="C:cytoplasm"/>
    <property type="evidence" value="ECO:0000318"/>
    <property type="project" value="GO_Central"/>
</dbReference>
<dbReference type="GO" id="GO:0005739">
    <property type="term" value="C:mitochondrion"/>
    <property type="evidence" value="ECO:0000266"/>
    <property type="project" value="RGD"/>
</dbReference>
<dbReference type="GO" id="GO:0005634">
    <property type="term" value="C:nucleus"/>
    <property type="evidence" value="ECO:0000250"/>
    <property type="project" value="UniProtKB"/>
</dbReference>
<dbReference type="GO" id="GO:0003677">
    <property type="term" value="F:DNA binding"/>
    <property type="evidence" value="ECO:0000318"/>
    <property type="project" value="GO_Central"/>
</dbReference>
<dbReference type="GO" id="GO:0140297">
    <property type="term" value="F:DNA-binding transcription factor binding"/>
    <property type="evidence" value="ECO:0000266"/>
    <property type="project" value="RGD"/>
</dbReference>
<dbReference type="GO" id="GO:0003690">
    <property type="term" value="F:double-stranded DNA binding"/>
    <property type="evidence" value="ECO:0000266"/>
    <property type="project" value="RGD"/>
</dbReference>
<dbReference type="GO" id="GO:0070888">
    <property type="term" value="F:E-box binding"/>
    <property type="evidence" value="ECO:0000266"/>
    <property type="project" value="RGD"/>
</dbReference>
<dbReference type="GO" id="GO:0071949">
    <property type="term" value="F:FAD binding"/>
    <property type="evidence" value="ECO:0000318"/>
    <property type="project" value="GO_Central"/>
</dbReference>
<dbReference type="GO" id="GO:0042826">
    <property type="term" value="F:histone deacetylase binding"/>
    <property type="evidence" value="ECO:0000266"/>
    <property type="project" value="RGD"/>
</dbReference>
<dbReference type="GO" id="GO:0019900">
    <property type="term" value="F:kinase binding"/>
    <property type="evidence" value="ECO:0000266"/>
    <property type="project" value="RGD"/>
</dbReference>
<dbReference type="GO" id="GO:0016922">
    <property type="term" value="F:nuclear receptor binding"/>
    <property type="evidence" value="ECO:0000266"/>
    <property type="project" value="RGD"/>
</dbReference>
<dbReference type="GO" id="GO:0019902">
    <property type="term" value="F:phosphatase binding"/>
    <property type="evidence" value="ECO:0000266"/>
    <property type="project" value="RGD"/>
</dbReference>
<dbReference type="GO" id="GO:0009881">
    <property type="term" value="F:photoreceptor activity"/>
    <property type="evidence" value="ECO:0007669"/>
    <property type="project" value="UniProtKB-KW"/>
</dbReference>
<dbReference type="GO" id="GO:0019901">
    <property type="term" value="F:protein kinase binding"/>
    <property type="evidence" value="ECO:0000266"/>
    <property type="project" value="RGD"/>
</dbReference>
<dbReference type="GO" id="GO:0032922">
    <property type="term" value="P:circadian regulation of gene expression"/>
    <property type="evidence" value="ECO:0000250"/>
    <property type="project" value="UniProtKB"/>
</dbReference>
<dbReference type="GO" id="GO:0007623">
    <property type="term" value="P:circadian rhythm"/>
    <property type="evidence" value="ECO:0000250"/>
    <property type="project" value="UniProtKB"/>
</dbReference>
<dbReference type="GO" id="GO:0043153">
    <property type="term" value="P:entrainment of circadian clock by photoperiod"/>
    <property type="evidence" value="ECO:0000250"/>
    <property type="project" value="UniProtKB"/>
</dbReference>
<dbReference type="GO" id="GO:0006094">
    <property type="term" value="P:gluconeogenesis"/>
    <property type="evidence" value="ECO:0000250"/>
    <property type="project" value="UniProtKB"/>
</dbReference>
<dbReference type="GO" id="GO:0042593">
    <property type="term" value="P:glucose homeostasis"/>
    <property type="evidence" value="ECO:0000250"/>
    <property type="project" value="UniProtKB"/>
</dbReference>
<dbReference type="GO" id="GO:0019915">
    <property type="term" value="P:lipid storage"/>
    <property type="evidence" value="ECO:0000266"/>
    <property type="project" value="RGD"/>
</dbReference>
<dbReference type="GO" id="GO:0042754">
    <property type="term" value="P:negative regulation of circadian rhythm"/>
    <property type="evidence" value="ECO:0000250"/>
    <property type="project" value="UniProtKB"/>
</dbReference>
<dbReference type="GO" id="GO:0045892">
    <property type="term" value="P:negative regulation of DNA-templated transcription"/>
    <property type="evidence" value="ECO:0000250"/>
    <property type="project" value="UniProtKB"/>
</dbReference>
<dbReference type="GO" id="GO:0045744">
    <property type="term" value="P:negative regulation of G protein-coupled receptor signaling pathway"/>
    <property type="evidence" value="ECO:0000250"/>
    <property type="project" value="UniProtKB"/>
</dbReference>
<dbReference type="GO" id="GO:2000850">
    <property type="term" value="P:negative regulation of glucocorticoid secretion"/>
    <property type="evidence" value="ECO:0000266"/>
    <property type="project" value="RGD"/>
</dbReference>
<dbReference type="GO" id="GO:0045721">
    <property type="term" value="P:negative regulation of gluconeogenesis"/>
    <property type="evidence" value="ECO:0000250"/>
    <property type="project" value="UniProtKB"/>
</dbReference>
<dbReference type="GO" id="GO:2000323">
    <property type="term" value="P:negative regulation of nuclear receptor-mediated glucocorticoid signaling pathway"/>
    <property type="evidence" value="ECO:0000250"/>
    <property type="project" value="UniProtKB"/>
</dbReference>
<dbReference type="GO" id="GO:0031397">
    <property type="term" value="P:negative regulation of protein ubiquitination"/>
    <property type="evidence" value="ECO:0000250"/>
    <property type="project" value="UniProtKB"/>
</dbReference>
<dbReference type="GO" id="GO:0000122">
    <property type="term" value="P:negative regulation of transcription by RNA polymerase II"/>
    <property type="evidence" value="ECO:0000250"/>
    <property type="project" value="UniProtKB"/>
</dbReference>
<dbReference type="GO" id="GO:0045722">
    <property type="term" value="P:positive regulation of gluconeogenesis"/>
    <property type="evidence" value="ECO:0000266"/>
    <property type="project" value="RGD"/>
</dbReference>
<dbReference type="GO" id="GO:0031398">
    <property type="term" value="P:positive regulation of protein ubiquitination"/>
    <property type="evidence" value="ECO:0000250"/>
    <property type="project" value="UniProtKB"/>
</dbReference>
<dbReference type="GO" id="GO:0042752">
    <property type="term" value="P:regulation of circadian rhythm"/>
    <property type="evidence" value="ECO:0000250"/>
    <property type="project" value="UniProtKB"/>
</dbReference>
<dbReference type="GO" id="GO:2000001">
    <property type="term" value="P:regulation of DNA damage checkpoint"/>
    <property type="evidence" value="ECO:0000250"/>
    <property type="project" value="UniProtKB"/>
</dbReference>
<dbReference type="GO" id="GO:0006111">
    <property type="term" value="P:regulation of gluconeogenesis"/>
    <property type="evidence" value="ECO:0000266"/>
    <property type="project" value="RGD"/>
</dbReference>
<dbReference type="GO" id="GO:0014823">
    <property type="term" value="P:response to activity"/>
    <property type="evidence" value="ECO:0000250"/>
    <property type="project" value="UniProtKB"/>
</dbReference>
<dbReference type="GO" id="GO:0033762">
    <property type="term" value="P:response to glucagon"/>
    <property type="evidence" value="ECO:0000250"/>
    <property type="project" value="UniProtKB"/>
</dbReference>
<dbReference type="GO" id="GO:0032868">
    <property type="term" value="P:response to insulin"/>
    <property type="evidence" value="ECO:0000266"/>
    <property type="project" value="RGD"/>
</dbReference>
<dbReference type="GO" id="GO:0009416">
    <property type="term" value="P:response to light stimulus"/>
    <property type="evidence" value="ECO:0000250"/>
    <property type="project" value="UniProtKB"/>
</dbReference>
<dbReference type="GO" id="GO:0042770">
    <property type="term" value="P:signal transduction in response to DNA damage"/>
    <property type="evidence" value="ECO:0000250"/>
    <property type="project" value="UniProtKB"/>
</dbReference>
<dbReference type="FunFam" id="1.10.579.10:FF:000001">
    <property type="entry name" value="Cryptochrome 1"/>
    <property type="match status" value="1"/>
</dbReference>
<dbReference type="FunFam" id="1.25.40.80:FF:000002">
    <property type="entry name" value="cryptochrome-1 isoform X1"/>
    <property type="match status" value="1"/>
</dbReference>
<dbReference type="FunFam" id="1.25.40.80:FF:000003">
    <property type="entry name" value="cryptochrome-1 isoform X1"/>
    <property type="match status" value="1"/>
</dbReference>
<dbReference type="FunFam" id="3.40.50.620:FF:000099">
    <property type="entry name" value="cryptochrome-1 isoform X1"/>
    <property type="match status" value="1"/>
</dbReference>
<dbReference type="Gene3D" id="1.25.40.80">
    <property type="match status" value="2"/>
</dbReference>
<dbReference type="Gene3D" id="1.10.579.10">
    <property type="entry name" value="DNA Cyclobutane Dipyrimidine Photolyase, subunit A, domain 3"/>
    <property type="match status" value="1"/>
</dbReference>
<dbReference type="Gene3D" id="3.40.50.620">
    <property type="entry name" value="HUPs"/>
    <property type="match status" value="1"/>
</dbReference>
<dbReference type="InterPro" id="IPR036134">
    <property type="entry name" value="Crypto/Photolyase_FAD-like_sf"/>
</dbReference>
<dbReference type="InterPro" id="IPR036155">
    <property type="entry name" value="Crypto/Photolyase_N_sf"/>
</dbReference>
<dbReference type="InterPro" id="IPR005101">
    <property type="entry name" value="Cryptochr/Photolyase_FAD-bd"/>
</dbReference>
<dbReference type="InterPro" id="IPR002081">
    <property type="entry name" value="Cryptochrome/DNA_photolyase_1"/>
</dbReference>
<dbReference type="InterPro" id="IPR006050">
    <property type="entry name" value="DNA_photolyase_N"/>
</dbReference>
<dbReference type="InterPro" id="IPR014729">
    <property type="entry name" value="Rossmann-like_a/b/a_fold"/>
</dbReference>
<dbReference type="PANTHER" id="PTHR11455">
    <property type="entry name" value="CRYPTOCHROME"/>
    <property type="match status" value="1"/>
</dbReference>
<dbReference type="PANTHER" id="PTHR11455:SF16">
    <property type="entry name" value="CRYPTOCHROME-1"/>
    <property type="match status" value="1"/>
</dbReference>
<dbReference type="Pfam" id="PF00875">
    <property type="entry name" value="DNA_photolyase"/>
    <property type="match status" value="1"/>
</dbReference>
<dbReference type="Pfam" id="PF03441">
    <property type="entry name" value="FAD_binding_7"/>
    <property type="match status" value="1"/>
</dbReference>
<dbReference type="SUPFAM" id="SSF48173">
    <property type="entry name" value="Cryptochrome/photolyase FAD-binding domain"/>
    <property type="match status" value="1"/>
</dbReference>
<dbReference type="SUPFAM" id="SSF52425">
    <property type="entry name" value="Cryptochrome/photolyase, N-terminal domain"/>
    <property type="match status" value="1"/>
</dbReference>
<dbReference type="PROSITE" id="PS51645">
    <property type="entry name" value="PHR_CRY_ALPHA_BETA"/>
    <property type="match status" value="1"/>
</dbReference>
<organism>
    <name type="scientific">Rattus norvegicus</name>
    <name type="common">Rat</name>
    <dbReference type="NCBI Taxonomy" id="10116"/>
    <lineage>
        <taxon>Eukaryota</taxon>
        <taxon>Metazoa</taxon>
        <taxon>Chordata</taxon>
        <taxon>Craniata</taxon>
        <taxon>Vertebrata</taxon>
        <taxon>Euteleostomi</taxon>
        <taxon>Mammalia</taxon>
        <taxon>Eutheria</taxon>
        <taxon>Euarchontoglires</taxon>
        <taxon>Glires</taxon>
        <taxon>Rodentia</taxon>
        <taxon>Myomorpha</taxon>
        <taxon>Muroidea</taxon>
        <taxon>Muridae</taxon>
        <taxon>Murinae</taxon>
        <taxon>Rattus</taxon>
    </lineage>
</organism>
<keyword id="KW-0090">Biological rhythms</keyword>
<keyword id="KW-0157">Chromophore</keyword>
<keyword id="KW-0963">Cytoplasm</keyword>
<keyword id="KW-0274">FAD</keyword>
<keyword id="KW-0285">Flavoprotein</keyword>
<keyword id="KW-1017">Isopeptide bond</keyword>
<keyword id="KW-0547">Nucleotide-binding</keyword>
<keyword id="KW-0539">Nucleus</keyword>
<keyword id="KW-0597">Phosphoprotein</keyword>
<keyword id="KW-0600">Photoreceptor protein</keyword>
<keyword id="KW-0675">Receptor</keyword>
<keyword id="KW-1185">Reference proteome</keyword>
<keyword id="KW-0678">Repressor</keyword>
<keyword id="KW-0716">Sensory transduction</keyword>
<keyword id="KW-0804">Transcription</keyword>
<keyword id="KW-0805">Transcription regulation</keyword>
<keyword id="KW-0832">Ubl conjugation</keyword>
<feature type="chain" id="PRO_0000261143" description="Cryptochrome-1">
    <location>
        <begin position="1"/>
        <end position="588"/>
    </location>
</feature>
<feature type="domain" description="Photolyase/cryptochrome alpha/beta">
    <location>
        <begin position="3"/>
        <end position="132"/>
    </location>
</feature>
<feature type="region of interest" description="Required for inhibition of CLOCK-BMAL1-mediated transcription" evidence="2">
    <location>
        <begin position="371"/>
        <end position="470"/>
    </location>
</feature>
<feature type="region of interest" description="Interaction with TIMELESS" evidence="2">
    <location>
        <begin position="471"/>
        <end position="493"/>
    </location>
</feature>
<feature type="region of interest" description="Disordered" evidence="4">
    <location>
        <begin position="511"/>
        <end position="588"/>
    </location>
</feature>
<feature type="short sequence motif" description="LIR 1" evidence="2">
    <location>
        <begin position="50"/>
        <end position="54"/>
    </location>
</feature>
<feature type="short sequence motif" description="LIR 2" evidence="2">
    <location>
        <begin position="82"/>
        <end position="87"/>
    </location>
</feature>
<feature type="short sequence motif" description="LIR 3" evidence="2">
    <location>
        <begin position="151"/>
        <end position="156"/>
    </location>
</feature>
<feature type="short sequence motif" description="LIR 4" evidence="2">
    <location>
        <begin position="255"/>
        <end position="260"/>
    </location>
</feature>
<feature type="short sequence motif" description="LIR 5" evidence="2">
    <location>
        <begin position="271"/>
        <end position="276"/>
    </location>
</feature>
<feature type="short sequence motif" description="LIR 6" evidence="2">
    <location>
        <begin position="285"/>
        <end position="290"/>
    </location>
</feature>
<feature type="short sequence motif" description="LIR 7" evidence="2">
    <location>
        <begin position="335"/>
        <end position="339"/>
    </location>
</feature>
<feature type="short sequence motif" description="LIR 8" evidence="2">
    <location>
        <begin position="379"/>
        <end position="384"/>
    </location>
</feature>
<feature type="short sequence motif" description="LIR 9" evidence="2">
    <location>
        <begin position="395"/>
        <end position="400"/>
    </location>
</feature>
<feature type="short sequence motif" description="LIR 10" evidence="2">
    <location>
        <begin position="411"/>
        <end position="416"/>
    </location>
</feature>
<feature type="short sequence motif" description="LIR 11" evidence="2">
    <location>
        <begin position="430"/>
        <end position="435"/>
    </location>
</feature>
<feature type="short sequence motif" description="LIR 12" evidence="2">
    <location>
        <begin position="486"/>
        <end position="491"/>
    </location>
</feature>
<feature type="short sequence motif" description="LIR 13" evidence="2">
    <location>
        <begin position="492"/>
        <end position="497"/>
    </location>
</feature>
<feature type="compositionally biased region" description="Polar residues" evidence="4">
    <location>
        <begin position="545"/>
        <end position="568"/>
    </location>
</feature>
<feature type="binding site" evidence="2">
    <location>
        <position position="252"/>
    </location>
    <ligand>
        <name>FAD</name>
        <dbReference type="ChEBI" id="CHEBI:57692"/>
    </ligand>
</feature>
<feature type="binding site" evidence="2">
    <location>
        <position position="289"/>
    </location>
    <ligand>
        <name>FAD</name>
        <dbReference type="ChEBI" id="CHEBI:57692"/>
    </ligand>
</feature>
<feature type="binding site" evidence="2">
    <location>
        <position position="355"/>
    </location>
    <ligand>
        <name>FAD</name>
        <dbReference type="ChEBI" id="CHEBI:57692"/>
    </ligand>
</feature>
<feature type="binding site" evidence="2">
    <location>
        <begin position="387"/>
        <end position="389"/>
    </location>
    <ligand>
        <name>FAD</name>
        <dbReference type="ChEBI" id="CHEBI:57692"/>
    </ligand>
</feature>
<feature type="modified residue" description="Phosphoserine; by AMPK" evidence="2">
    <location>
        <position position="71"/>
    </location>
</feature>
<feature type="modified residue" description="Phosphoserine; by MAPK" evidence="2">
    <location>
        <position position="247"/>
    </location>
</feature>
<feature type="modified residue" description="Phosphoserine; by AMPK" evidence="2">
    <location>
        <position position="280"/>
    </location>
</feature>
<feature type="modified residue" description="Phosphoserine" evidence="2">
    <location>
        <position position="570"/>
    </location>
</feature>
<feature type="cross-link" description="Glycyl lysine isopeptide (Lys-Gly) (interchain with G-Cter in ubiquitin)" evidence="2">
    <location>
        <position position="11"/>
    </location>
</feature>
<feature type="cross-link" description="Glycyl lysine isopeptide (Lys-Gly) (interchain with G-Cter in ubiquitin)" evidence="2">
    <location>
        <position position="107"/>
    </location>
</feature>
<feature type="cross-link" description="Glycyl lysine isopeptide (Lys-Gly) (interchain with G-Cter in ubiquitin)" evidence="2">
    <location>
        <position position="159"/>
    </location>
</feature>
<feature type="cross-link" description="Glycyl lysine isopeptide (Lys-Gly) (interchain with G-Cter in ubiquitin)" evidence="2">
    <location>
        <position position="329"/>
    </location>
</feature>
<feature type="cross-link" description="Glycyl lysine isopeptide (Lys-Gly) (interchain with G-Cter in ubiquitin)" evidence="2">
    <location>
        <position position="485"/>
    </location>
</feature>
<feature type="cross-link" description="Glycyl lysine isopeptide (Lys-Gly) (interchain with G-Cter in ubiquitin)" evidence="2">
    <location>
        <position position="567"/>
    </location>
</feature>
<feature type="sequence conflict" description="In Ref. 1; AAQ11980." evidence="7" ref="1">
    <original>C</original>
    <variation>W</variation>
    <location>
        <position position="33"/>
    </location>
</feature>
<proteinExistence type="evidence at protein level"/>
<evidence type="ECO:0000250" key="1"/>
<evidence type="ECO:0000250" key="2">
    <source>
        <dbReference type="UniProtKB" id="P97784"/>
    </source>
</evidence>
<evidence type="ECO:0000250" key="3">
    <source>
        <dbReference type="UniProtKB" id="Q16526"/>
    </source>
</evidence>
<evidence type="ECO:0000256" key="4">
    <source>
        <dbReference type="SAM" id="MobiDB-lite"/>
    </source>
</evidence>
<evidence type="ECO:0000269" key="5">
    <source>
    </source>
</evidence>
<evidence type="ECO:0000269" key="6">
    <source>
    </source>
</evidence>
<evidence type="ECO:0000305" key="7"/>
<sequence length="588" mass="66230">MGVNAVHWFRKGLRLHDNPALKECIQGADTIRCVYILDPWFAGSSNVGINRWRFLLQCLEDLDANLRKLNSRLFVIRGQPADVFPRLFKEWNITKLSIEYDSEPFGKERDAAIKKLATEAGVEVIVRISHTLYDLDKIIELNGGQPPLTYKRFQTLVSKMEPLEMPADTITSDVIGKCTTPLSDDHDEKYGVPSLEELGFDTDGLSSAVWPGGETEALTRLERHLERKAWVANFERPRMNANSLLASPTGLSPYLRFGCLSCRLFYFKLTDLYKKVKKNSSPPLSLYGQLLWREFFYTAATNNPRFDKMEGNPICVQIPWDKNPEALAKWAEGRTGFPWIDAIMTQLRQEGWIHHLARHAVACFLTRGDLWISWEEGMKVFEELLLDADWSINAGSWMWLSCSSFFQQFFHCYCPVGFGRRTDPNGDYIRRYLPVLRGFPAKYIYDPWNAPEGIQKVAKCLIGVNYPKPMVNHAEASRLNIERMKQIYQQLSRYRGLGLLASVPSNPNGNGGLMGYAPGENVPSGGSGGGNCSQGSGILHYAHGDSQQTNPLKQGRSSMGTGLSSGKRPSQEEDAQSVGPKVQRQSSN</sequence>
<reference key="1">
    <citation type="journal article" date="2004" name="Mol. Cells">
        <title>Cloning and circadian expression of rat Cry1.</title>
        <authorList>
            <person name="Park K."/>
            <person name="Kang H.M."/>
        </authorList>
    </citation>
    <scope>NUCLEOTIDE SEQUENCE [LARGE SCALE MRNA]</scope>
    <scope>INDUCTION</scope>
    <source>
        <strain>Sprague-Dawley</strain>
        <tissue>Forebrain</tissue>
        <tissue>Suprachiasmatic nucleus</tissue>
    </source>
</reference>
<reference key="2">
    <citation type="submission" date="2005-10" db="EMBL/GenBank/DDBJ databases">
        <authorList>
            <consortium name="NIH - Mammalian Gene Collection (MGC) project"/>
        </authorList>
    </citation>
    <scope>NUCLEOTIDE SEQUENCE [LARGE SCALE MRNA]</scope>
    <source>
        <tissue>Prostate</tissue>
    </source>
</reference>
<reference key="3">
    <citation type="journal article" date="2006" name="Proc. Natl. Acad. Sci. U.S.A.">
        <title>Posttranslational regulation of the mammalian circadian clock by cryptochrome and protein phosphatase 5.</title>
        <authorList>
            <person name="Partch C.L."/>
            <person name="Shields K.F."/>
            <person name="Thompson C.L."/>
            <person name="Selby C.P."/>
            <person name="Sancar A."/>
        </authorList>
    </citation>
    <scope>INTERACTION WITH PPP5C</scope>
</reference>
<comment type="function">
    <text evidence="2 3">Transcriptional repressor which forms a core component of the circadian clock. The circadian clock, an internal time-keeping system, regulates various physiological processes through the generation of approximately 24 hour circadian rhythms in gene expression, which are translated into rhythms in metabolism and behavior. It is derived from the Latin roots 'circa' (about) and 'diem' (day) and acts as an important regulator of a wide array of physiological functions including metabolism, sleep, body temperature, blood pressure, endocrine, immune, cardiovascular, and renal function. Consists of two major components: the central clock, residing in the suprachiasmatic nucleus (SCN) of the brain, and the peripheral clocks that are present in nearly every tissue and organ system. Both the central and peripheral clocks can be reset by environmental cues, also known as Zeitgebers (German for 'timegivers'). The predominant Zeitgeber for the central clock is light, which is sensed by retina and signals directly to the SCN. The central clock entrains the peripheral clocks through neuronal and hormonal signals, body temperature and feeding-related cues, aligning all clocks with the external light/dark cycle. Circadian rhythms allow an organism to achieve temporal homeostasis with its environment at the molecular level by regulating gene expression to create a peak of protein expression once every 24 hours to control when a particular physiological process is most active with respect to the solar day. Transcription and translation of core clock components (CLOCK, NPAS2, BMAL1, BMAL2, PER1, PER2, PER3, CRY1 and CRY2) plays a critical role in rhythm generation, whereas delays imposed by post-translational modifications (PTMs) are important for determining the period (tau) of the rhythms (tau refers to the period of a rhythm and is the length, in time, of one complete cycle). A diurnal rhythm is synchronized with the day/night cycle, while the ultradian and infradian rhythms have a period shorter and longer than 24 hours, respectively. Disruptions in the circadian rhythms contribute to the pathology of cardiovascular diseases, cancer, metabolic syndromes and aging. A transcription/translation feedback loop (TTFL) forms the core of the molecular circadian clock mechanism. Transcription factors, CLOCK or NPAS2 and BMAL1 or BMAL2, form the positive limb of the feedback loop, act in the form of a heterodimer and activate the transcription of core clock genes and clock-controlled genes (involved in key metabolic processes), harboring E-box elements (5'-CACGTG-3') within their promoters. The core clock genes: PER1/2/3 and CRY1/2 which are transcriptional repressors form the negative limb of the feedback loop and interact with the CLOCK|NPAS2-BMAL1|BMAL2 heterodimer inhibiting its activity and thereby negatively regulating their own expression. This heterodimer also activates nuclear receptors NR1D1/2 and RORA/B/G, which form a second feedback loop and which activate and repress BMAL1 transcription, respectively. CRY1 and CRY2 have redundant functions but also differential and selective contributions at least in defining the pace of the SCN circadian clock and its circadian transcriptional outputs. More potent transcriptional repressor in cerebellum and liver than CRY2, though more effective in lengthening the period of the SCN oscillator. On its side, CRY2 seems to play a critical role in tuning SCN circadian period by opposing the action of CRY1. With CRY2, is dispensable for circadian rhythm generation but necessary for the development of intercellular networks for rhythm synchrony. Capable of translocating circadian clock core proteins such as PER proteins to the nucleus. Interacts with CLOCK-BMAL1 independently of PER proteins and is found at CLOCK-BMAL1-bound sites, suggesting that CRY may act as a molecular gatekeeper to maintain CLOCK-BMAL1 in a poised and repressed state until the proper time for transcriptional activation. Represses the CLOCK-BMAL1 induced transcription of BHLHE40/DEC1, ATF4, MTA1, KLF10 and NAMPT. May repress circadian target genes expression in collaboration with HDAC1 and HDAC2 through histone deacetylation. Mediates the clock-control activation of ATR and modulates ATR-mediated DNA damage checkpoint. In liver, mediates circadian regulation of cAMP signaling and gluconeogenesis by binding to membrane-coupled G proteins and blocking glucagon-mediated increases in intracellular cAMP concentrations and CREB1 phosphorylation. Inhibits hepatic gluconeogenesis by decreasing nuclear FOXO1 levels that down-regulates gluconeogenic gene expression. Besides its role in the maintenance of the circadian clock, is also involved in the regulation of other processes. Represses glucocorticoid receptor NR3C1/GR-induced transcriptional activity by binding to glucocorticoid response elements (GREs). Plays a key role in glucose and lipid metabolism modulation, in part, through the transcriptional regulation of genes involved in these pathways, such as LEP or ACSL4 (By similarity). Represses PPARD and its target genes in the skeletal muscle and limits exercise capacity (By similarity). Plays an essential role in the generation of circadian rhythms in the retina (By similarity). Represses the transcriptional activity of NR1I2 (By similarity).</text>
</comment>
<comment type="cofactor">
    <cofactor evidence="2">
        <name>FAD</name>
        <dbReference type="ChEBI" id="CHEBI:57692"/>
    </cofactor>
    <text evidence="2">Binds 1 FAD per subunit. Only a minority of the protein molecules contain bound FAD. Contrary to the situation in photolyases, the FAD is bound in a shallow, surface-exposed pocket.</text>
</comment>
<comment type="cofactor">
    <cofactor evidence="1">
        <name>(6R)-5,10-methylene-5,6,7,8-tetrahydrofolate</name>
        <dbReference type="ChEBI" id="CHEBI:15636"/>
    </cofactor>
    <text evidence="1">Binds 1 5,10-methenyltetrahydrofolate (MTHF) non-covalently per subunit.</text>
</comment>
<comment type="subunit">
    <text evidence="2 3 6">Component of the circadian core oscillator, which includes the CRY proteins, CLOCK or NPAS2, BMAL1 or BMAL2, CSNK1D and/or CSNK1E, TIMELESS, and the PER proteins (By similarity). Interacts directly with TIMELESS (By similarity). Interacts directly with PER1, PER2 and PER3; interaction with PER2 inhibits its ubiquitination and vice versa (By similarity). Interacts with FBXL21 (By similarity). Interacts with FBXL3 (By similarity). Interacts with CLOCK-BMAL1 independently of PER2 and DNA (By similarity). Interacts with HDAC1, HDAC2 and SIN3B (By similarity). Interacts with nuclear receptors AR, NR1D1, NR3C1/GR, RORA and RORC; the interaction with at least NR3C1/GR is ligand dependent (By similarity). Interacts with PRKDC (By similarity). Interacts with the G protein subunit alpha GNAS; the interaction may block GPCR-mediated regulation of cAMP concentrations (By similarity). Interacts with PRMT5 (By similarity). Interacts with EZH2 (By similarity). Interacts with MYBBP1A, DOCK7, HNRNPU, RPL7A, RPL8 and RPS3 (By similarity). Interacts with PPP5C (via TPR repeats) (PubMed:16790549). Interacts with MAP1LC3B (By similarity). Interacts with CLOCK (By similarity). Interacts with BMAL1 (By similarity). Interacts weakly with HDAC3; this interaction is enhanced in the presence of FBXL3 (By similarity). Interacts with TRIM28, KCTD5 and DDB1 (By similarity). Interacts with FOXO1 (By similarity). Interacts with DTL and DDB1-CUL4A complex (By similarity). Interacts with HNF4A (By similarity). Interacts with PSMD2 in a KDM8-dependent manner (By similarity). Interacts with KDM8 in a FBXL3-dependent manner (By similarity). Interacts with PPARG in a ligand-dependent manner (By similarity). Interacts with PPARD (via domain NR LBD) and NR1I2 (via domain NR LBD) in a ligand-dependent manner (By similarity). Interacts with PPARA, NR1I3 and VDR (By similarity).</text>
</comment>
<comment type="subcellular location">
    <subcellularLocation>
        <location evidence="2">Cytoplasm</location>
    </subcellularLocation>
    <subcellularLocation>
        <location evidence="2">Nucleus</location>
    </subcellularLocation>
    <text evidence="2">Translocated to the nucleus through interaction with other clock proteins such as PER2 or BMAL1.</text>
</comment>
<comment type="induction">
    <text evidence="5">Expression is regulated by light and circadian rhythms. Peak expression in the suprachiasma nucleus (SCN) and eye at the day/night transition (CT12).</text>
</comment>
<comment type="domain">
    <text evidence="2">The LIR motifs (LC3-interacting region) 3 and 5 are required for its interaction with MAP1LC3B and for its autophagy-mediated degradation.</text>
</comment>
<comment type="PTM">
    <text evidence="2">Phosphorylation on Ser-247 by MAPK is important for the inhibition of CLOCK-BMAL1-mediated transcriptional activity. Phosphorylation by CSNK1E requires interaction with PER1 or PER2. Phosphorylation at Ser-71 and Ser-280 by AMPK decreases protein stability. Phosphorylation at Ser-570 exhibits a robust circadian rhythm with a peak at CT8, increases protein stability, prevents SCF(FBXL3)-mediated degradation and is antagonized by interaction with PRKDC (By similarity).</text>
</comment>
<comment type="PTM">
    <text evidence="2">Ubiquitinated by the SCF(FBXL3) and SCF(FBXL21) complexes, regulating the balance between degradation and stabilization (By similarity). The SCF(FBXL3) complex is mainly nuclear and mediates ubiquitination and subsequent degradation of CRY1 (By similarity). In contrast, cytoplasmic SCF(FBXL21) complex-mediated ubiquitination leads to stabilize CRY1 and counteract the activity of the SCF(FBXL3) complex (By similarity). The SCF(FBXL3) and SCF(FBXL21) complexes probably mediate ubiquitination at different Lys residues (By similarity). Ubiquitination at Lys-11 and Lys-107 are specifically ubiquitinated by the SCF(FBXL21) complex but not by the SCF(FBXL3) complex (By similarity). Ubiquitination may be inhibited by PER2 (By similarity). Deubiquitinated by USP7 (By similarity).</text>
</comment>
<comment type="PTM">
    <text evidence="2">Undergoes autophagy-mediated degradation in the liver in a time-dependent manner. Autophagic degradation of CRY1 (an inhibitor of gluconeogenesis) occurs during periods of reduced feeding allowing induction of gluconeogenesis and maintenance of blood glucose levels.</text>
</comment>
<comment type="similarity">
    <text evidence="7">Belongs to the DNA photolyase class-1 family.</text>
</comment>
<gene>
    <name type="primary">Cry1</name>
</gene>